<accession>Q71YI3</accession>
<feature type="chain" id="PRO_0000148399" description="Dihydroorotate dehydrogenase B (NAD(+)), catalytic subunit">
    <location>
        <begin position="1"/>
        <end position="304"/>
    </location>
</feature>
<feature type="active site" description="Nucleophile">
    <location>
        <position position="130"/>
    </location>
</feature>
<feature type="binding site" evidence="1">
    <location>
        <position position="21"/>
    </location>
    <ligand>
        <name>FMN</name>
        <dbReference type="ChEBI" id="CHEBI:58210"/>
    </ligand>
</feature>
<feature type="binding site" evidence="1">
    <location>
        <begin position="45"/>
        <end position="46"/>
    </location>
    <ligand>
        <name>FMN</name>
        <dbReference type="ChEBI" id="CHEBI:58210"/>
    </ligand>
</feature>
<feature type="binding site" evidence="1">
    <location>
        <position position="45"/>
    </location>
    <ligand>
        <name>substrate</name>
    </ligand>
</feature>
<feature type="binding site" evidence="1">
    <location>
        <begin position="69"/>
        <end position="73"/>
    </location>
    <ligand>
        <name>substrate</name>
    </ligand>
</feature>
<feature type="binding site" evidence="1">
    <location>
        <position position="99"/>
    </location>
    <ligand>
        <name>FMN</name>
        <dbReference type="ChEBI" id="CHEBI:58210"/>
    </ligand>
</feature>
<feature type="binding site" evidence="1">
    <location>
        <position position="127"/>
    </location>
    <ligand>
        <name>FMN</name>
        <dbReference type="ChEBI" id="CHEBI:58210"/>
    </ligand>
</feature>
<feature type="binding site" evidence="1">
    <location>
        <position position="127"/>
    </location>
    <ligand>
        <name>substrate</name>
    </ligand>
</feature>
<feature type="binding site" evidence="1">
    <location>
        <position position="165"/>
    </location>
    <ligand>
        <name>FMN</name>
        <dbReference type="ChEBI" id="CHEBI:58210"/>
    </ligand>
</feature>
<feature type="binding site" evidence="1">
    <location>
        <position position="191"/>
    </location>
    <ligand>
        <name>FMN</name>
        <dbReference type="ChEBI" id="CHEBI:58210"/>
    </ligand>
</feature>
<feature type="binding site" evidence="1">
    <location>
        <begin position="192"/>
        <end position="193"/>
    </location>
    <ligand>
        <name>substrate</name>
    </ligand>
</feature>
<feature type="binding site" evidence="1">
    <location>
        <position position="217"/>
    </location>
    <ligand>
        <name>FMN</name>
        <dbReference type="ChEBI" id="CHEBI:58210"/>
    </ligand>
</feature>
<feature type="binding site" evidence="1">
    <location>
        <begin position="243"/>
        <end position="244"/>
    </location>
    <ligand>
        <name>FMN</name>
        <dbReference type="ChEBI" id="CHEBI:58210"/>
    </ligand>
</feature>
<feature type="binding site" evidence="1">
    <location>
        <begin position="265"/>
        <end position="266"/>
    </location>
    <ligand>
        <name>FMN</name>
        <dbReference type="ChEBI" id="CHEBI:58210"/>
    </ligand>
</feature>
<evidence type="ECO:0000250" key="1"/>
<evidence type="ECO:0000305" key="2"/>
<dbReference type="EC" id="1.3.1.14"/>
<dbReference type="EMBL" id="AE017262">
    <property type="protein sequence ID" value="AAT04631.1"/>
    <property type="molecule type" value="Genomic_DNA"/>
</dbReference>
<dbReference type="RefSeq" id="WP_003725665.1">
    <property type="nucleotide sequence ID" value="NC_002973.6"/>
</dbReference>
<dbReference type="SMR" id="Q71YI3"/>
<dbReference type="KEGG" id="lmf:LMOf2365_1861"/>
<dbReference type="HOGENOM" id="CLU_042042_0_0_9"/>
<dbReference type="UniPathway" id="UPA00070">
    <property type="reaction ID" value="UER00945"/>
</dbReference>
<dbReference type="GO" id="GO:0005737">
    <property type="term" value="C:cytoplasm"/>
    <property type="evidence" value="ECO:0007669"/>
    <property type="project" value="UniProtKB-SubCell"/>
</dbReference>
<dbReference type="GO" id="GO:0004589">
    <property type="term" value="F:dihydroorotate dehydrogenase (NAD+) activity"/>
    <property type="evidence" value="ECO:0007669"/>
    <property type="project" value="UniProtKB-EC"/>
</dbReference>
<dbReference type="GO" id="GO:0006207">
    <property type="term" value="P:'de novo' pyrimidine nucleobase biosynthetic process"/>
    <property type="evidence" value="ECO:0007669"/>
    <property type="project" value="InterPro"/>
</dbReference>
<dbReference type="GO" id="GO:0044205">
    <property type="term" value="P:'de novo' UMP biosynthetic process"/>
    <property type="evidence" value="ECO:0007669"/>
    <property type="project" value="UniProtKB-UniRule"/>
</dbReference>
<dbReference type="CDD" id="cd04740">
    <property type="entry name" value="DHOD_1B_like"/>
    <property type="match status" value="1"/>
</dbReference>
<dbReference type="FunFam" id="3.20.20.70:FF:000069">
    <property type="entry name" value="Dihydroorotate dehydrogenase"/>
    <property type="match status" value="1"/>
</dbReference>
<dbReference type="Gene3D" id="3.20.20.70">
    <property type="entry name" value="Aldolase class I"/>
    <property type="match status" value="1"/>
</dbReference>
<dbReference type="HAMAP" id="MF_00224">
    <property type="entry name" value="DHO_dh_type1"/>
    <property type="match status" value="1"/>
</dbReference>
<dbReference type="InterPro" id="IPR013785">
    <property type="entry name" value="Aldolase_TIM"/>
</dbReference>
<dbReference type="InterPro" id="IPR050074">
    <property type="entry name" value="DHO_dehydrogenase"/>
</dbReference>
<dbReference type="InterPro" id="IPR033888">
    <property type="entry name" value="DHOD_1B"/>
</dbReference>
<dbReference type="InterPro" id="IPR024920">
    <property type="entry name" value="Dihydroorotate_DH_1"/>
</dbReference>
<dbReference type="InterPro" id="IPR012135">
    <property type="entry name" value="Dihydroorotate_DH_1_2"/>
</dbReference>
<dbReference type="InterPro" id="IPR005720">
    <property type="entry name" value="Dihydroorotate_DH_cat"/>
</dbReference>
<dbReference type="InterPro" id="IPR001295">
    <property type="entry name" value="Dihydroorotate_DH_CS"/>
</dbReference>
<dbReference type="InterPro" id="IPR049622">
    <property type="entry name" value="Dihydroorotate_DH_I"/>
</dbReference>
<dbReference type="NCBIfam" id="NF005574">
    <property type="entry name" value="PRK07259.1"/>
    <property type="match status" value="1"/>
</dbReference>
<dbReference type="NCBIfam" id="TIGR01037">
    <property type="entry name" value="pyrD_sub1_fam"/>
    <property type="match status" value="1"/>
</dbReference>
<dbReference type="PANTHER" id="PTHR48109:SF1">
    <property type="entry name" value="DIHYDROOROTATE DEHYDROGENASE (FUMARATE)"/>
    <property type="match status" value="1"/>
</dbReference>
<dbReference type="PANTHER" id="PTHR48109">
    <property type="entry name" value="DIHYDROOROTATE DEHYDROGENASE (QUINONE), MITOCHONDRIAL-RELATED"/>
    <property type="match status" value="1"/>
</dbReference>
<dbReference type="Pfam" id="PF01180">
    <property type="entry name" value="DHO_dh"/>
    <property type="match status" value="1"/>
</dbReference>
<dbReference type="PIRSF" id="PIRSF000164">
    <property type="entry name" value="DHO_oxidase"/>
    <property type="match status" value="1"/>
</dbReference>
<dbReference type="SUPFAM" id="SSF51395">
    <property type="entry name" value="FMN-linked oxidoreductases"/>
    <property type="match status" value="1"/>
</dbReference>
<dbReference type="PROSITE" id="PS00911">
    <property type="entry name" value="DHODEHASE_1"/>
    <property type="match status" value="1"/>
</dbReference>
<dbReference type="PROSITE" id="PS00912">
    <property type="entry name" value="DHODEHASE_2"/>
    <property type="match status" value="1"/>
</dbReference>
<comment type="function">
    <text evidence="1">Catalyzes the conversion of dihydroorotate to orotate with NAD(+) as electron acceptor.</text>
</comment>
<comment type="catalytic activity">
    <reaction>
        <text>(S)-dihydroorotate + NAD(+) = orotate + NADH + H(+)</text>
        <dbReference type="Rhea" id="RHEA:13513"/>
        <dbReference type="ChEBI" id="CHEBI:15378"/>
        <dbReference type="ChEBI" id="CHEBI:30839"/>
        <dbReference type="ChEBI" id="CHEBI:30864"/>
        <dbReference type="ChEBI" id="CHEBI:57540"/>
        <dbReference type="ChEBI" id="CHEBI:57945"/>
        <dbReference type="EC" id="1.3.1.14"/>
    </reaction>
</comment>
<comment type="cofactor">
    <cofactor evidence="1">
        <name>FMN</name>
        <dbReference type="ChEBI" id="CHEBI:58210"/>
    </cofactor>
    <text evidence="1">Binds 1 FMN per subunit.</text>
</comment>
<comment type="pathway">
    <text>Pyrimidine metabolism; UMP biosynthesis via de novo pathway; orotate from (S)-dihydroorotate (NAD(+) route): step 1/1.</text>
</comment>
<comment type="subunit">
    <text evidence="1">Heterotetramer of 2 PyrK and 2 PyrD type B subunits.</text>
</comment>
<comment type="subcellular location">
    <subcellularLocation>
        <location evidence="1">Cytoplasm</location>
    </subcellularLocation>
</comment>
<comment type="similarity">
    <text evidence="2">Belongs to the dihydroorotate dehydrogenase family. Type 1 subfamily.</text>
</comment>
<sequence>MNRLAVEIPGLSLKNPIMPASGCFGFGQEYSKYYDLNELGAIMAKAVTPEPRLGNPTPRVAETASGMLNAIGLQNPGLEHVLAHELPFLEQFETPIIANVAGATEDDYVQVCARIGESKAVKAIELNISCPNVKHGGIAFGTDPDVAHRLTKAVKNVATVPVYVKLSPNVADIVSIAQAIEAAGADGLTMINTLLGMRIDLKTRKPIIANGTGGLSGPAIKPVAIRMIHQVREVSNIPIIGMGGVQTVDDVLEFLIAGADAVAVGTMNFTDPFICPKLISELPKRMDELGISSLQELKKERANQ</sequence>
<name>PYRDB_LISMF</name>
<proteinExistence type="inferred from homology"/>
<protein>
    <recommendedName>
        <fullName>Dihydroorotate dehydrogenase B (NAD(+)), catalytic subunit</fullName>
        <shortName>DHOD B</shortName>
        <shortName>DHODase B</shortName>
        <shortName>DHOdehase B</shortName>
        <ecNumber>1.3.1.14</ecNumber>
    </recommendedName>
    <alternativeName>
        <fullName>Dihydroorotate oxidase B</fullName>
    </alternativeName>
    <alternativeName>
        <fullName>Orotate reductase (NADH)</fullName>
    </alternativeName>
</protein>
<gene>
    <name type="primary">pyrD</name>
    <name type="ordered locus">LMOf2365_1861</name>
</gene>
<reference key="1">
    <citation type="journal article" date="2004" name="Nucleic Acids Res.">
        <title>Whole genome comparisons of serotype 4b and 1/2a strains of the food-borne pathogen Listeria monocytogenes reveal new insights into the core genome components of this species.</title>
        <authorList>
            <person name="Nelson K.E."/>
            <person name="Fouts D.E."/>
            <person name="Mongodin E.F."/>
            <person name="Ravel J."/>
            <person name="DeBoy R.T."/>
            <person name="Kolonay J.F."/>
            <person name="Rasko D.A."/>
            <person name="Angiuoli S.V."/>
            <person name="Gill S.R."/>
            <person name="Paulsen I.T."/>
            <person name="Peterson J.D."/>
            <person name="White O."/>
            <person name="Nelson W.C."/>
            <person name="Nierman W.C."/>
            <person name="Beanan M.J."/>
            <person name="Brinkac L.M."/>
            <person name="Daugherty S.C."/>
            <person name="Dodson R.J."/>
            <person name="Durkin A.S."/>
            <person name="Madupu R."/>
            <person name="Haft D.H."/>
            <person name="Selengut J."/>
            <person name="Van Aken S.E."/>
            <person name="Khouri H.M."/>
            <person name="Fedorova N."/>
            <person name="Forberger H.A."/>
            <person name="Tran B."/>
            <person name="Kathariou S."/>
            <person name="Wonderling L.D."/>
            <person name="Uhlich G.A."/>
            <person name="Bayles D.O."/>
            <person name="Luchansky J.B."/>
            <person name="Fraser C.M."/>
        </authorList>
    </citation>
    <scope>NUCLEOTIDE SEQUENCE [LARGE SCALE GENOMIC DNA]</scope>
    <source>
        <strain>F2365</strain>
    </source>
</reference>
<organism>
    <name type="scientific">Listeria monocytogenes serotype 4b (strain F2365)</name>
    <dbReference type="NCBI Taxonomy" id="265669"/>
    <lineage>
        <taxon>Bacteria</taxon>
        <taxon>Bacillati</taxon>
        <taxon>Bacillota</taxon>
        <taxon>Bacilli</taxon>
        <taxon>Bacillales</taxon>
        <taxon>Listeriaceae</taxon>
        <taxon>Listeria</taxon>
    </lineage>
</organism>
<keyword id="KW-0963">Cytoplasm</keyword>
<keyword id="KW-0285">Flavoprotein</keyword>
<keyword id="KW-0288">FMN</keyword>
<keyword id="KW-0520">NAD</keyword>
<keyword id="KW-0560">Oxidoreductase</keyword>
<keyword id="KW-0665">Pyrimidine biosynthesis</keyword>